<sequence length="260" mass="29911">MSIRIKIDKLRQIVAYFSEFSEEVSINVDSTDELMYIFAALGGSVNIWAIIPLSASVFYRGAENIVFNLPVSKVKSCLCSFHNDAIIDIEPDLENNLVKLSSYHVVSVDCNKELMPIRTDTTICLSIDQKKSYVFNFHKYEEKCCGRTVIHLEWLLGFIKCISQHQHLAIMFKDDNIIMKTPGNTDAFSREYSMTECSQELQKFSFKIAISSLNKLRGFKKRVNVFETRIVMDNDDNILGMLFSDRVQSFKINIFMAFLD</sequence>
<proteinExistence type="evidence at protein level"/>
<organism>
    <name type="scientific">Vaccinia virus (strain Western Reserve)</name>
    <name type="common">VACV</name>
    <name type="synonym">Vaccinia virus (strain WR)</name>
    <dbReference type="NCBI Taxonomy" id="10254"/>
    <lineage>
        <taxon>Viruses</taxon>
        <taxon>Varidnaviria</taxon>
        <taxon>Bamfordvirae</taxon>
        <taxon>Nucleocytoviricota</taxon>
        <taxon>Pokkesviricetes</taxon>
        <taxon>Chitovirales</taxon>
        <taxon>Poxviridae</taxon>
        <taxon>Chordopoxvirinae</taxon>
        <taxon>Orthopoxvirus</taxon>
        <taxon>Vaccinia virus</taxon>
    </lineage>
</organism>
<feature type="chain" id="PRO_0000099167" description="Late transcription factor 1">
    <location>
        <begin position="1"/>
        <end position="260"/>
    </location>
</feature>
<feature type="mutagenesis site" description="Essential for transactivation." evidence="2">
    <location>
        <position position="60"/>
    </location>
</feature>
<evidence type="ECO:0000269" key="1">
    <source>
    </source>
</evidence>
<evidence type="ECO:0000269" key="2">
    <source>
    </source>
</evidence>
<evidence type="ECO:0000269" key="3">
    <source>
    </source>
</evidence>
<evidence type="ECO:0000269" key="4">
    <source>
    </source>
</evidence>
<evidence type="ECO:0000269" key="5">
    <source>
    </source>
</evidence>
<evidence type="ECO:0000269" key="6">
    <source>
    </source>
</evidence>
<evidence type="ECO:0000305" key="7"/>
<dbReference type="EMBL" id="M34067">
    <property type="protein sequence ID" value="AAA48347.1"/>
    <property type="molecule type" value="Genomic_DNA"/>
</dbReference>
<dbReference type="EMBL" id="J03399">
    <property type="protein sequence ID" value="AAB59819.1"/>
    <property type="molecule type" value="Genomic_DNA"/>
</dbReference>
<dbReference type="EMBL" id="AY243312">
    <property type="protein sequence ID" value="AAO89365.1"/>
    <property type="molecule type" value="Genomic_DNA"/>
</dbReference>
<dbReference type="PIR" id="A35347">
    <property type="entry name" value="A35347"/>
</dbReference>
<dbReference type="RefSeq" id="YP_232968.1">
    <property type="nucleotide sequence ID" value="NC_006998.1"/>
</dbReference>
<dbReference type="IntAct" id="P68613">
    <property type="interactions" value="3"/>
</dbReference>
<dbReference type="MINT" id="P68613"/>
<dbReference type="DNASU" id="3707542"/>
<dbReference type="GeneID" id="3707542"/>
<dbReference type="KEGG" id="vg:3707542"/>
<dbReference type="Proteomes" id="UP000000344">
    <property type="component" value="Genome"/>
</dbReference>
<dbReference type="GO" id="GO:0042802">
    <property type="term" value="F:identical protein binding"/>
    <property type="evidence" value="ECO:0000353"/>
    <property type="project" value="IntAct"/>
</dbReference>
<dbReference type="GO" id="GO:0039695">
    <property type="term" value="P:DNA-templated viral transcription"/>
    <property type="evidence" value="ECO:0000314"/>
    <property type="project" value="UniProtKB"/>
</dbReference>
<dbReference type="GO" id="GO:0006355">
    <property type="term" value="P:regulation of DNA-templated transcription"/>
    <property type="evidence" value="ECO:0007669"/>
    <property type="project" value="InterPro"/>
</dbReference>
<dbReference type="InterPro" id="IPR005022">
    <property type="entry name" value="Pox_TAP"/>
</dbReference>
<dbReference type="Pfam" id="PF03355">
    <property type="entry name" value="Pox_TAP"/>
    <property type="match status" value="1"/>
</dbReference>
<protein>
    <recommendedName>
        <fullName>Late transcription factor 1</fullName>
        <shortName>VLTF-1</shortName>
    </recommendedName>
    <alternativeName>
        <fullName>Trans-activator protein GK1</fullName>
    </alternativeName>
</protein>
<keyword id="KW-0010">Activator</keyword>
<keyword id="KW-1185">Reference proteome</keyword>
<keyword id="KW-0804">Transcription</keyword>
<keyword id="KW-0805">Transcription regulation</keyword>
<organismHost>
    <name type="scientific">Bos taurus</name>
    <name type="common">Bovine</name>
    <dbReference type="NCBI Taxonomy" id="9913"/>
</organismHost>
<name>VLTF1_VACCW</name>
<accession>P68613</accession>
<accession>P21029</accession>
<accession>Q76ZT9</accession>
<comment type="function">
    <text evidence="4 5">Associates with RNA polymerase to initiate transcription from late gene promoters.</text>
</comment>
<comment type="subunit">
    <text evidence="1">Interacts with the late transcription factors VLTF-2 and VLTF-3. Interacts with the late transcription elongation factor H5/VLTF-4. Interacts with itself.</text>
</comment>
<comment type="interaction">
    <interactant intactId="EBI-7273218">
        <id>P68613</id>
    </interactant>
    <interactant intactId="EBI-7273218">
        <id>P68613</id>
        <label>OPG093</label>
    </interactant>
    <organismsDiffer>false</organismsDiffer>
    <experiments>2</experiments>
</comment>
<comment type="interaction">
    <interactant intactId="EBI-7273218">
        <id>P68613</id>
    </interactant>
    <interactant intactId="EBI-7272435">
        <id>P07242</id>
        <label>OPG110</label>
    </interactant>
    <organismsDiffer>false</organismsDiffer>
    <experiments>4</experiments>
</comment>
<comment type="interaction">
    <interactant intactId="EBI-7273218">
        <id>P68613</id>
    </interactant>
    <interactant intactId="EBI-7273273">
        <id>P07610</id>
        <label>OPG126</label>
    </interactant>
    <organismsDiffer>false</organismsDiffer>
    <experiments>4</experiments>
</comment>
<comment type="interaction">
    <interactant intactId="EBI-7273218">
        <id>P68613</id>
    </interactant>
    <interactant intactId="EBI-7366338">
        <id>P68318</id>
        <label>OPG127</label>
    </interactant>
    <organismsDiffer>true</organismsDiffer>
    <experiments>3</experiments>
</comment>
<comment type="induction">
    <text evidence="3 6">Expressed in the intermediate phase of the viral replicative cycle.</text>
</comment>
<comment type="similarity">
    <text evidence="7">Belongs to the chordopoxvirinae VLTF-1 family.</text>
</comment>
<gene>
    <name type="primary">OPG093</name>
    <name type="synonym">VLTF1</name>
    <name type="ordered locus">VACWR086</name>
    <name type="ORF">G8R</name>
</gene>
<reference key="1">
    <citation type="journal article" date="1990" name="Cell">
        <title>Role of DNA replication in vaccinia virus gene expression: a naked template is required for transcription of three late trans-activator genes.</title>
        <authorList>
            <person name="Keck J.G."/>
            <person name="Baldick C.J. Jr."/>
            <person name="Moss B."/>
        </authorList>
    </citation>
    <scope>NUCLEOTIDE SEQUENCE [GENOMIC DNA]</scope>
    <scope>FUNCTION</scope>
</reference>
<reference key="2">
    <citation type="journal article" date="1991" name="Virology">
        <title>Genetic and molecular biological characterization of a vaccinia virus gene which renders the virus dependent on isatin-beta-thiosemicarbazone (IBT).</title>
        <authorList>
            <person name="Meis R.J."/>
            <person name="Condit R.C."/>
        </authorList>
    </citation>
    <scope>NUCLEOTIDE SEQUENCE [GENOMIC DNA]</scope>
    <scope>MUTAGENESIS OF ARG-60</scope>
</reference>
<reference key="3">
    <citation type="submission" date="2003-02" db="EMBL/GenBank/DDBJ databases">
        <title>Sequencing of the coding region of Vaccinia-WR to an average 9-fold redundancy and an error rate of 0.16/10kb.</title>
        <authorList>
            <person name="Esposito J.J."/>
            <person name="Frace A.M."/>
            <person name="Sammons S.A."/>
            <person name="Olsen-Rasmussen M."/>
            <person name="Osborne J."/>
            <person name="Wohlhueter R."/>
        </authorList>
    </citation>
    <scope>NUCLEOTIDE SEQUENCE [LARGE SCALE GENOMIC DNA]</scope>
</reference>
<reference key="4">
    <citation type="journal article" date="1989" name="J. Virol.">
        <title>Identification of factors specific for transcription of the late class of vaccinia virus genes.</title>
        <authorList>
            <person name="Wright C.F."/>
            <person name="Moss B."/>
        </authorList>
    </citation>
    <scope>IDENTIFICATION</scope>
    <scope>FUNCTION</scope>
</reference>
<reference key="5">
    <citation type="journal article" date="1991" name="J. Virol.">
        <title>A transcription factor for expression of vaccinia virus late genes is encoded by an intermediate gene.</title>
        <authorList>
            <person name="Wright C.F."/>
            <person name="Keck J.G."/>
            <person name="Tsai M.M."/>
            <person name="Moss B."/>
        </authorList>
    </citation>
    <scope>INDUCTION</scope>
</reference>
<reference key="6">
    <citation type="journal article" date="2004" name="Virology">
        <title>Protein interactions among the vaccinia virus late transcription factors.</title>
        <authorList>
            <person name="Dellis S."/>
            <person name="Strickland K.C."/>
            <person name="McCrary W.J."/>
            <person name="Patel A."/>
            <person name="Stocum E."/>
            <person name="Wright C.F."/>
        </authorList>
    </citation>
    <scope>INTERACTION WITH THE LATE TRANSCRIPTION FACTORS VLTF-2; VLTF-3 AND THE LATE TRANSCRIPTION ELONGATION FACTOR H5/VLTF-4</scope>
</reference>
<reference key="7">
    <citation type="journal article" date="2015" name="J. Virol.">
        <title>Deciphering poxvirus gene expression by RNA sequencing and ribosome profiling.</title>
        <authorList>
            <person name="Yang Z."/>
            <person name="Cao S."/>
            <person name="Martens C.A."/>
            <person name="Porcella S.F."/>
            <person name="Xie Z."/>
            <person name="Ma M."/>
            <person name="Shen B."/>
            <person name="Moss B."/>
        </authorList>
    </citation>
    <scope>INDUCTION</scope>
</reference>